<keyword id="KW-0175">Coiled coil</keyword>
<keyword id="KW-0963">Cytoplasm</keyword>
<keyword id="KW-0396">Initiation factor</keyword>
<keyword id="KW-0648">Protein biosynthesis</keyword>
<keyword id="KW-1185">Reference proteome</keyword>
<keyword id="KW-0677">Repeat</keyword>
<keyword id="KW-0694">RNA-binding</keyword>
<keyword id="KW-0853">WD repeat</keyword>
<sequence>MAKKKGEEQDFEEEPNFDDPEGFVDDVSDEELLGDFLRQKPCESDGVENVIVVDNIPVVGAARFPKLKGIIEKIFKNAGTIVNVHYPKDEEDNTKGYAFVEYKNQESAEEAVKSLNNYRLDKHYTLLVNRFADFQKYSDIPKEWSPPQPQPYKVQNDLYNFLLEADAQDQFCVVSETVPGSVQVQFCQNTQPEPTELLKRERFTDTYVKWSPKGTYIVTFHKQGVVVWGGSSFVKVNKFAHSNAQFVDISPCEQYLVTYGPNGQKIVIWDIRTGAEKRTFVSDGMSNASMLRWSHDDRYVARLVDSQIQIYDTTTFFLLDMKSIRVEGIRNFSWSPTDNIIAYWVAEEVDVPAKVTLMAIPKKTELRTKNLFNVADCKIHWQKSGDYLCVKVDRFSKSKKEKKDKKDSDVKFLGMFYNFEIFHMREKDIPVDSVEVKETILAFAWEPVGSKFSIIHGEPSSANVSFYETNKGQEPVLVKKLEKKVCGHLFWSPRGQFIVLANLQMGTFEFVDTNDFSIMKTGDHYRASEVEWDPTGRYVVTGTSGKAKEDQGYYMWSFQGRILKRVNLKNFMLFLWRPRPPTLLSDAKQKEILKNLKKYYSQFESKDRLRMTRASKELIEKRAKLREQFTEYRSKRVKEWEDQKKRRMQLRNNVDTDTLEADPDNVEEEIVEILVREDTTVIE</sequence>
<dbReference type="EMBL" id="AAAB01008986">
    <property type="protein sequence ID" value="EAA00199.3"/>
    <property type="molecule type" value="Genomic_DNA"/>
</dbReference>
<dbReference type="RefSeq" id="XP_320387.3">
    <property type="nucleotide sequence ID" value="XM_320387.4"/>
</dbReference>
<dbReference type="SMR" id="Q7PZY1"/>
<dbReference type="FunCoup" id="Q7PZY1">
    <property type="interactions" value="2854"/>
</dbReference>
<dbReference type="STRING" id="7165.Q7PZY1"/>
<dbReference type="PaxDb" id="7165-AGAP012140-PA"/>
<dbReference type="EnsemblMetazoa" id="AGAP012140-RA">
    <property type="protein sequence ID" value="AGAP012140-PA"/>
    <property type="gene ID" value="AGAP012140"/>
</dbReference>
<dbReference type="GeneID" id="1280537"/>
<dbReference type="KEGG" id="aga:1280537"/>
<dbReference type="CTD" id="8662"/>
<dbReference type="VEuPathDB" id="VectorBase:AGAMI1_007165"/>
<dbReference type="VEuPathDB" id="VectorBase:AGAP012140"/>
<dbReference type="eggNOG" id="KOG2314">
    <property type="taxonomic scope" value="Eukaryota"/>
</dbReference>
<dbReference type="HOGENOM" id="CLU_011152_1_0_1"/>
<dbReference type="InParanoid" id="Q7PZY1"/>
<dbReference type="OMA" id="LWGGPQF"/>
<dbReference type="PhylomeDB" id="Q7PZY1"/>
<dbReference type="Proteomes" id="UP000007062">
    <property type="component" value="Chromosome 3L"/>
</dbReference>
<dbReference type="GO" id="GO:0016282">
    <property type="term" value="C:eukaryotic 43S preinitiation complex"/>
    <property type="evidence" value="ECO:0007669"/>
    <property type="project" value="UniProtKB-UniRule"/>
</dbReference>
<dbReference type="GO" id="GO:0033290">
    <property type="term" value="C:eukaryotic 48S preinitiation complex"/>
    <property type="evidence" value="ECO:0007669"/>
    <property type="project" value="UniProtKB-UniRule"/>
</dbReference>
<dbReference type="GO" id="GO:0005852">
    <property type="term" value="C:eukaryotic translation initiation factor 3 complex"/>
    <property type="evidence" value="ECO:0000250"/>
    <property type="project" value="UniProtKB"/>
</dbReference>
<dbReference type="GO" id="GO:0003723">
    <property type="term" value="F:RNA binding"/>
    <property type="evidence" value="ECO:0007669"/>
    <property type="project" value="UniProtKB-UniRule"/>
</dbReference>
<dbReference type="GO" id="GO:0003743">
    <property type="term" value="F:translation initiation factor activity"/>
    <property type="evidence" value="ECO:0000250"/>
    <property type="project" value="UniProtKB"/>
</dbReference>
<dbReference type="GO" id="GO:0031369">
    <property type="term" value="F:translation initiation factor binding"/>
    <property type="evidence" value="ECO:0007669"/>
    <property type="project" value="InterPro"/>
</dbReference>
<dbReference type="GO" id="GO:0001732">
    <property type="term" value="P:formation of cytoplasmic translation initiation complex"/>
    <property type="evidence" value="ECO:0007669"/>
    <property type="project" value="UniProtKB-UniRule"/>
</dbReference>
<dbReference type="GO" id="GO:0006446">
    <property type="term" value="P:regulation of translational initiation"/>
    <property type="evidence" value="ECO:0000250"/>
    <property type="project" value="UniProtKB"/>
</dbReference>
<dbReference type="GO" id="GO:0006413">
    <property type="term" value="P:translational initiation"/>
    <property type="evidence" value="ECO:0000318"/>
    <property type="project" value="GO_Central"/>
</dbReference>
<dbReference type="CDD" id="cd12278">
    <property type="entry name" value="RRM_eIF3B"/>
    <property type="match status" value="1"/>
</dbReference>
<dbReference type="FunFam" id="2.130.10.10:FF:001060">
    <property type="entry name" value="Eukaryotic translation initiation factor 3 subunit B"/>
    <property type="match status" value="1"/>
</dbReference>
<dbReference type="FunFam" id="3.30.70.330:FF:000235">
    <property type="entry name" value="Eukaryotic translation initiation factor 3 subunit B"/>
    <property type="match status" value="1"/>
</dbReference>
<dbReference type="Gene3D" id="3.30.70.330">
    <property type="match status" value="1"/>
</dbReference>
<dbReference type="Gene3D" id="2.130.10.10">
    <property type="entry name" value="YVTN repeat-like/Quinoprotein amine dehydrogenase"/>
    <property type="match status" value="1"/>
</dbReference>
<dbReference type="HAMAP" id="MF_03001">
    <property type="entry name" value="eIF3b"/>
    <property type="match status" value="1"/>
</dbReference>
<dbReference type="InterPro" id="IPR011400">
    <property type="entry name" value="EIF3B"/>
</dbReference>
<dbReference type="InterPro" id="IPR034363">
    <property type="entry name" value="eIF3B_RRM"/>
</dbReference>
<dbReference type="InterPro" id="IPR012677">
    <property type="entry name" value="Nucleotide-bd_a/b_plait_sf"/>
</dbReference>
<dbReference type="InterPro" id="IPR035979">
    <property type="entry name" value="RBD_domain_sf"/>
</dbReference>
<dbReference type="InterPro" id="IPR000504">
    <property type="entry name" value="RRM_dom"/>
</dbReference>
<dbReference type="InterPro" id="IPR013979">
    <property type="entry name" value="TIF_beta_prop-like"/>
</dbReference>
<dbReference type="InterPro" id="IPR015943">
    <property type="entry name" value="WD40/YVTN_repeat-like_dom_sf"/>
</dbReference>
<dbReference type="PANTHER" id="PTHR14068">
    <property type="entry name" value="EUKARYOTIC TRANSLATION INITIATION FACTOR 3 EIF3 -RELATED"/>
    <property type="match status" value="1"/>
</dbReference>
<dbReference type="PANTHER" id="PTHR14068:SF0">
    <property type="entry name" value="EUKARYOTIC TRANSLATION INITIATION FACTOR 3 SUBUNIT B"/>
    <property type="match status" value="1"/>
</dbReference>
<dbReference type="Pfam" id="PF08662">
    <property type="entry name" value="eIF2A"/>
    <property type="match status" value="1"/>
</dbReference>
<dbReference type="Pfam" id="PF00076">
    <property type="entry name" value="RRM_1"/>
    <property type="match status" value="1"/>
</dbReference>
<dbReference type="PIRSF" id="PIRSF036424">
    <property type="entry name" value="eIF3b"/>
    <property type="match status" value="1"/>
</dbReference>
<dbReference type="SMART" id="SM00360">
    <property type="entry name" value="RRM"/>
    <property type="match status" value="1"/>
</dbReference>
<dbReference type="SUPFAM" id="SSF54928">
    <property type="entry name" value="RNA-binding domain, RBD"/>
    <property type="match status" value="1"/>
</dbReference>
<dbReference type="SUPFAM" id="SSF69322">
    <property type="entry name" value="Tricorn protease domain 2"/>
    <property type="match status" value="1"/>
</dbReference>
<dbReference type="PROSITE" id="PS50102">
    <property type="entry name" value="RRM"/>
    <property type="match status" value="1"/>
</dbReference>
<name>EIF3B_ANOGA</name>
<proteinExistence type="inferred from homology"/>
<evidence type="ECO:0000255" key="1">
    <source>
        <dbReference type="HAMAP-Rule" id="MF_03001"/>
    </source>
</evidence>
<evidence type="ECO:0000256" key="2">
    <source>
        <dbReference type="SAM" id="MobiDB-lite"/>
    </source>
</evidence>
<comment type="function">
    <text evidence="1">RNA-binding component of the eukaryotic translation initiation factor 3 (eIF-3) complex, which is involved in protein synthesis of a specialized repertoire of mRNAs and, together with other initiation factors, stimulates binding of mRNA and methionyl-tRNAi to the 40S ribosome. The eIF-3 complex specifically targets and initiates translation of a subset of mRNAs involved in cell proliferation.</text>
</comment>
<comment type="subunit">
    <text evidence="1">Component of the eukaryotic translation initiation factor 3 (eIF-3) complex.</text>
</comment>
<comment type="subcellular location">
    <subcellularLocation>
        <location evidence="1">Cytoplasm</location>
    </subcellularLocation>
</comment>
<comment type="similarity">
    <text evidence="1">Belongs to the eIF-3 subunit B family.</text>
</comment>
<reference key="1">
    <citation type="journal article" date="2002" name="Science">
        <title>The genome sequence of the malaria mosquito Anopheles gambiae.</title>
        <authorList>
            <person name="Holt R.A."/>
            <person name="Subramanian G.M."/>
            <person name="Halpern A."/>
            <person name="Sutton G.G."/>
            <person name="Charlab R."/>
            <person name="Nusskern D.R."/>
            <person name="Wincker P."/>
            <person name="Clark A.G."/>
            <person name="Ribeiro J.M.C."/>
            <person name="Wides R."/>
            <person name="Salzberg S.L."/>
            <person name="Loftus B.J."/>
            <person name="Yandell M.D."/>
            <person name="Majoros W.H."/>
            <person name="Rusch D.B."/>
            <person name="Lai Z."/>
            <person name="Kraft C.L."/>
            <person name="Abril J.F."/>
            <person name="Anthouard V."/>
            <person name="Arensburger P."/>
            <person name="Atkinson P.W."/>
            <person name="Baden H."/>
            <person name="de Berardinis V."/>
            <person name="Baldwin D."/>
            <person name="Benes V."/>
            <person name="Biedler J."/>
            <person name="Blass C."/>
            <person name="Bolanos R."/>
            <person name="Boscus D."/>
            <person name="Barnstead M."/>
            <person name="Cai S."/>
            <person name="Center A."/>
            <person name="Chaturverdi K."/>
            <person name="Christophides G.K."/>
            <person name="Chrystal M.A.M."/>
            <person name="Clamp M."/>
            <person name="Cravchik A."/>
            <person name="Curwen V."/>
            <person name="Dana A."/>
            <person name="Delcher A."/>
            <person name="Dew I."/>
            <person name="Evans C.A."/>
            <person name="Flanigan M."/>
            <person name="Grundschober-Freimoser A."/>
            <person name="Friedli L."/>
            <person name="Gu Z."/>
            <person name="Guan P."/>
            <person name="Guigo R."/>
            <person name="Hillenmeyer M.E."/>
            <person name="Hladun S.L."/>
            <person name="Hogan J.R."/>
            <person name="Hong Y.S."/>
            <person name="Hoover J."/>
            <person name="Jaillon O."/>
            <person name="Ke Z."/>
            <person name="Kodira C.D."/>
            <person name="Kokoza E."/>
            <person name="Koutsos A."/>
            <person name="Letunic I."/>
            <person name="Levitsky A.A."/>
            <person name="Liang Y."/>
            <person name="Lin J.-J."/>
            <person name="Lobo N.F."/>
            <person name="Lopez J.R."/>
            <person name="Malek J.A."/>
            <person name="McIntosh T.C."/>
            <person name="Meister S."/>
            <person name="Miller J.R."/>
            <person name="Mobarry C."/>
            <person name="Mongin E."/>
            <person name="Murphy S.D."/>
            <person name="O'Brochta D.A."/>
            <person name="Pfannkoch C."/>
            <person name="Qi R."/>
            <person name="Regier M.A."/>
            <person name="Remington K."/>
            <person name="Shao H."/>
            <person name="Sharakhova M.V."/>
            <person name="Sitter C.D."/>
            <person name="Shetty J."/>
            <person name="Smith T.J."/>
            <person name="Strong R."/>
            <person name="Sun J."/>
            <person name="Thomasova D."/>
            <person name="Ton L.Q."/>
            <person name="Topalis P."/>
            <person name="Tu Z.J."/>
            <person name="Unger M.F."/>
            <person name="Walenz B."/>
            <person name="Wang A.H."/>
            <person name="Wang J."/>
            <person name="Wang M."/>
            <person name="Wang X."/>
            <person name="Woodford K.J."/>
            <person name="Wortman J.R."/>
            <person name="Wu M."/>
            <person name="Yao A."/>
            <person name="Zdobnov E.M."/>
            <person name="Zhang H."/>
            <person name="Zhao Q."/>
            <person name="Zhao S."/>
            <person name="Zhu S.C."/>
            <person name="Zhimulev I."/>
            <person name="Coluzzi M."/>
            <person name="della Torre A."/>
            <person name="Roth C.W."/>
            <person name="Louis C."/>
            <person name="Kalush F."/>
            <person name="Mural R.J."/>
            <person name="Myers E.W."/>
            <person name="Adams M.D."/>
            <person name="Smith H.O."/>
            <person name="Broder S."/>
            <person name="Gardner M.J."/>
            <person name="Fraser C.M."/>
            <person name="Birney E."/>
            <person name="Bork P."/>
            <person name="Brey P.T."/>
            <person name="Venter J.C."/>
            <person name="Weissenbach J."/>
            <person name="Kafatos F.C."/>
            <person name="Collins F.H."/>
            <person name="Hoffman S.L."/>
        </authorList>
    </citation>
    <scope>NUCLEOTIDE SEQUENCE [LARGE SCALE GENOMIC DNA]</scope>
    <source>
        <strain>PEST</strain>
    </source>
</reference>
<feature type="chain" id="PRO_0000363791" description="Eukaryotic translation initiation factor 3 subunit B">
    <location>
        <begin position="1"/>
        <end position="683"/>
    </location>
</feature>
<feature type="domain" description="RRM" evidence="1">
    <location>
        <begin position="49"/>
        <end position="133"/>
    </location>
</feature>
<feature type="repeat" description="WD 1">
    <location>
        <begin position="199"/>
        <end position="238"/>
    </location>
</feature>
<feature type="repeat" description="WD 2">
    <location>
        <begin position="240"/>
        <end position="279"/>
    </location>
</feature>
<feature type="repeat" description="WD 3">
    <location>
        <begin position="283"/>
        <end position="321"/>
    </location>
</feature>
<feature type="repeat" description="WD 4">
    <location>
        <begin position="324"/>
        <end position="359"/>
    </location>
</feature>
<feature type="repeat" description="WD 5">
    <location>
        <begin position="435"/>
        <end position="477"/>
    </location>
</feature>
<feature type="repeat" description="WD 6">
    <location>
        <begin position="522"/>
        <end position="567"/>
    </location>
</feature>
<feature type="region of interest" description="Disordered" evidence="2">
    <location>
        <begin position="1"/>
        <end position="25"/>
    </location>
</feature>
<feature type="coiled-coil region" evidence="1">
    <location>
        <begin position="611"/>
        <end position="638"/>
    </location>
</feature>
<feature type="compositionally biased region" description="Acidic residues" evidence="2">
    <location>
        <begin position="9"/>
        <end position="25"/>
    </location>
</feature>
<protein>
    <recommendedName>
        <fullName evidence="1">Eukaryotic translation initiation factor 3 subunit B</fullName>
        <shortName evidence="1">eIF3b</shortName>
    </recommendedName>
    <alternativeName>
        <fullName evidence="1">Eukaryotic translation initiation factor 3 subunit 9</fullName>
    </alternativeName>
</protein>
<accession>Q7PZY1</accession>
<organism>
    <name type="scientific">Anopheles gambiae</name>
    <name type="common">African malaria mosquito</name>
    <dbReference type="NCBI Taxonomy" id="7165"/>
    <lineage>
        <taxon>Eukaryota</taxon>
        <taxon>Metazoa</taxon>
        <taxon>Ecdysozoa</taxon>
        <taxon>Arthropoda</taxon>
        <taxon>Hexapoda</taxon>
        <taxon>Insecta</taxon>
        <taxon>Pterygota</taxon>
        <taxon>Neoptera</taxon>
        <taxon>Endopterygota</taxon>
        <taxon>Diptera</taxon>
        <taxon>Nematocera</taxon>
        <taxon>Culicoidea</taxon>
        <taxon>Culicidae</taxon>
        <taxon>Anophelinae</taxon>
        <taxon>Anopheles</taxon>
    </lineage>
</organism>
<gene>
    <name evidence="1" type="primary">eIF3-S9</name>
    <name type="ORF">AGAP012140</name>
</gene>